<organism>
    <name type="scientific">Staphylococcus aureus (strain MW2)</name>
    <dbReference type="NCBI Taxonomy" id="196620"/>
    <lineage>
        <taxon>Bacteria</taxon>
        <taxon>Bacillati</taxon>
        <taxon>Bacillota</taxon>
        <taxon>Bacilli</taxon>
        <taxon>Bacillales</taxon>
        <taxon>Staphylococcaceae</taxon>
        <taxon>Staphylococcus</taxon>
    </lineage>
</organism>
<comment type="function">
    <text evidence="1">Transfers and isomerizes the ribose moiety from AdoMet to the 7-aminomethyl group of 7-deazaguanine (preQ1-tRNA) to give epoxyqueuosine (oQ-tRNA).</text>
</comment>
<comment type="catalytic activity">
    <reaction evidence="1">
        <text>7-aminomethyl-7-carbaguanosine(34) in tRNA + S-adenosyl-L-methionine = epoxyqueuosine(34) in tRNA + adenine + L-methionine + 2 H(+)</text>
        <dbReference type="Rhea" id="RHEA:32155"/>
        <dbReference type="Rhea" id="RHEA-COMP:10342"/>
        <dbReference type="Rhea" id="RHEA-COMP:18582"/>
        <dbReference type="ChEBI" id="CHEBI:15378"/>
        <dbReference type="ChEBI" id="CHEBI:16708"/>
        <dbReference type="ChEBI" id="CHEBI:57844"/>
        <dbReference type="ChEBI" id="CHEBI:59789"/>
        <dbReference type="ChEBI" id="CHEBI:82833"/>
        <dbReference type="ChEBI" id="CHEBI:194443"/>
        <dbReference type="EC" id="2.4.99.17"/>
    </reaction>
</comment>
<comment type="pathway">
    <text evidence="1">tRNA modification; tRNA-queuosine biosynthesis.</text>
</comment>
<comment type="subunit">
    <text evidence="1">Monomer.</text>
</comment>
<comment type="subcellular location">
    <subcellularLocation>
        <location evidence="1">Cytoplasm</location>
    </subcellularLocation>
</comment>
<comment type="similarity">
    <text evidence="1">Belongs to the QueA family.</text>
</comment>
<proteinExistence type="inferred from homology"/>
<gene>
    <name evidence="1" type="primary">queA</name>
    <name type="ordered locus">MW1590</name>
</gene>
<accession>P65952</accession>
<accession>Q99TL3</accession>
<reference key="1">
    <citation type="journal article" date="2002" name="Lancet">
        <title>Genome and virulence determinants of high virulence community-acquired MRSA.</title>
        <authorList>
            <person name="Baba T."/>
            <person name="Takeuchi F."/>
            <person name="Kuroda M."/>
            <person name="Yuzawa H."/>
            <person name="Aoki K."/>
            <person name="Oguchi A."/>
            <person name="Nagai Y."/>
            <person name="Iwama N."/>
            <person name="Asano K."/>
            <person name="Naimi T."/>
            <person name="Kuroda H."/>
            <person name="Cui L."/>
            <person name="Yamamoto K."/>
            <person name="Hiramatsu K."/>
        </authorList>
    </citation>
    <scope>NUCLEOTIDE SEQUENCE [LARGE SCALE GENOMIC DNA]</scope>
    <source>
        <strain>MW2</strain>
    </source>
</reference>
<keyword id="KW-0963">Cytoplasm</keyword>
<keyword id="KW-0671">Queuosine biosynthesis</keyword>
<keyword id="KW-0949">S-adenosyl-L-methionine</keyword>
<keyword id="KW-0808">Transferase</keyword>
<feature type="chain" id="PRO_0000165443" description="S-adenosylmethionine:tRNA ribosyltransferase-isomerase">
    <location>
        <begin position="1"/>
        <end position="341"/>
    </location>
</feature>
<name>QUEA_STAAW</name>
<sequence length="341" mass="38970">MNIEEFDYDLPESLIAQTPLKDRDHSRLLVMDRETGEMKHLHFKDIIEYFRPGDTLVLNDTRVMPARLFGLKEETGAKVEMLMLTQIEGNDWEVLLKPAKRIKVGNKLNFGNGKIIAECIKEMDQGGRIMRLHYEGILQERLDELGEMPLPPYIKERLDDPDRYQTVYAKESGSAAAPTAGLHFTDELLTEIKNKGVNIAFVTLHVGLGTFRPVSVDDVNDHEMHSEYYQMTQETADLLNDTKSKGHRIISVGTTSTRTLETIRRDHDKFVETSGWTNIFIYPGFDFKAIDGQITNFHLPKSTLVMLVSAFSTRENVLNAYKTAVNLEYRFFSFGDAMLII</sequence>
<dbReference type="EC" id="2.4.99.17" evidence="1"/>
<dbReference type="EMBL" id="BA000033">
    <property type="protein sequence ID" value="BAB95455.1"/>
    <property type="molecule type" value="Genomic_DNA"/>
</dbReference>
<dbReference type="RefSeq" id="WP_001019178.1">
    <property type="nucleotide sequence ID" value="NC_003923.1"/>
</dbReference>
<dbReference type="SMR" id="P65952"/>
<dbReference type="KEGG" id="sam:MW1590"/>
<dbReference type="HOGENOM" id="CLU_039110_1_0_9"/>
<dbReference type="UniPathway" id="UPA00392"/>
<dbReference type="GO" id="GO:0005737">
    <property type="term" value="C:cytoplasm"/>
    <property type="evidence" value="ECO:0007669"/>
    <property type="project" value="UniProtKB-SubCell"/>
</dbReference>
<dbReference type="GO" id="GO:0051075">
    <property type="term" value="F:S-adenosylmethionine:tRNA ribosyltransferase-isomerase activity"/>
    <property type="evidence" value="ECO:0007669"/>
    <property type="project" value="UniProtKB-EC"/>
</dbReference>
<dbReference type="GO" id="GO:0008616">
    <property type="term" value="P:queuosine biosynthetic process"/>
    <property type="evidence" value="ECO:0007669"/>
    <property type="project" value="UniProtKB-UniRule"/>
</dbReference>
<dbReference type="GO" id="GO:0002099">
    <property type="term" value="P:tRNA wobble guanine modification"/>
    <property type="evidence" value="ECO:0007669"/>
    <property type="project" value="TreeGrafter"/>
</dbReference>
<dbReference type="FunFam" id="2.40.10.240:FF:000002">
    <property type="entry name" value="S-adenosylmethionine:tRNA ribosyltransferase-isomerase"/>
    <property type="match status" value="1"/>
</dbReference>
<dbReference type="FunFam" id="3.40.1780.10:FF:000001">
    <property type="entry name" value="S-adenosylmethionine:tRNA ribosyltransferase-isomerase"/>
    <property type="match status" value="1"/>
</dbReference>
<dbReference type="Gene3D" id="2.40.10.240">
    <property type="entry name" value="QueA-like"/>
    <property type="match status" value="1"/>
</dbReference>
<dbReference type="Gene3D" id="3.40.1780.10">
    <property type="entry name" value="QueA-like"/>
    <property type="match status" value="1"/>
</dbReference>
<dbReference type="HAMAP" id="MF_00113">
    <property type="entry name" value="QueA"/>
    <property type="match status" value="1"/>
</dbReference>
<dbReference type="InterPro" id="IPR003699">
    <property type="entry name" value="QueA"/>
</dbReference>
<dbReference type="InterPro" id="IPR042118">
    <property type="entry name" value="QueA_dom1"/>
</dbReference>
<dbReference type="InterPro" id="IPR042119">
    <property type="entry name" value="QueA_dom2"/>
</dbReference>
<dbReference type="InterPro" id="IPR036100">
    <property type="entry name" value="QueA_sf"/>
</dbReference>
<dbReference type="NCBIfam" id="NF001140">
    <property type="entry name" value="PRK00147.1"/>
    <property type="match status" value="1"/>
</dbReference>
<dbReference type="NCBIfam" id="TIGR00113">
    <property type="entry name" value="queA"/>
    <property type="match status" value="1"/>
</dbReference>
<dbReference type="PANTHER" id="PTHR30307">
    <property type="entry name" value="S-ADENOSYLMETHIONINE:TRNA RIBOSYLTRANSFERASE-ISOMERASE"/>
    <property type="match status" value="1"/>
</dbReference>
<dbReference type="PANTHER" id="PTHR30307:SF0">
    <property type="entry name" value="S-ADENOSYLMETHIONINE:TRNA RIBOSYLTRANSFERASE-ISOMERASE"/>
    <property type="match status" value="1"/>
</dbReference>
<dbReference type="Pfam" id="PF02547">
    <property type="entry name" value="Queuosine_synth"/>
    <property type="match status" value="1"/>
</dbReference>
<dbReference type="SUPFAM" id="SSF111337">
    <property type="entry name" value="QueA-like"/>
    <property type="match status" value="1"/>
</dbReference>
<protein>
    <recommendedName>
        <fullName evidence="1">S-adenosylmethionine:tRNA ribosyltransferase-isomerase</fullName>
        <ecNumber evidence="1">2.4.99.17</ecNumber>
    </recommendedName>
    <alternativeName>
        <fullName evidence="1">Queuosine biosynthesis protein QueA</fullName>
    </alternativeName>
</protein>
<evidence type="ECO:0000255" key="1">
    <source>
        <dbReference type="HAMAP-Rule" id="MF_00113"/>
    </source>
</evidence>